<sequence>MNPMDRQTEGQEPQHQDRQPGIESKMNPLPLSEDEDYRGSGKLKGKVAIITGGDSGIGRAAAIAFAKEGADISILYLDEHSDAEETRKRIEKENVRCLLIPGDVGDENHCEQAVQQTVDHFGKLDILVNNAAEQHPQDSILNISTEQLEKTFRTNIFSMFHMTKKALPHLQEGCAIINTTSITAYEGDTALIDYSSTKGAIVSFTRSMAKSLADKGIRVNAVAPGPIWTPLIPATFPEEKVKQHGLDTPMGRPGQPVEHAGAYVLLASDESSYMTGQTIHVNGGRFIST</sequence>
<name>YHDF_BACSU</name>
<reference key="1">
    <citation type="journal article" date="1998" name="Microbiology">
        <title>The 172 kb prkA-addAB region from 83 degrees to 97 degrees of the Bacillus subtilis chromosome contains several dysfunctional genes, the glyB marker, many genes encoding transporter proteins, and the ubiquitous hit gene.</title>
        <authorList>
            <person name="Noback M.A."/>
            <person name="Holsappel S."/>
            <person name="Kiewiet R."/>
            <person name="Terpstra P."/>
            <person name="Wambutt R."/>
            <person name="Wedler H."/>
            <person name="Venema G."/>
            <person name="Bron S."/>
        </authorList>
    </citation>
    <scope>NUCLEOTIDE SEQUENCE [GENOMIC DNA]</scope>
    <source>
        <strain>168</strain>
    </source>
</reference>
<reference key="2">
    <citation type="journal article" date="1997" name="Nature">
        <title>The complete genome sequence of the Gram-positive bacterium Bacillus subtilis.</title>
        <authorList>
            <person name="Kunst F."/>
            <person name="Ogasawara N."/>
            <person name="Moszer I."/>
            <person name="Albertini A.M."/>
            <person name="Alloni G."/>
            <person name="Azevedo V."/>
            <person name="Bertero M.G."/>
            <person name="Bessieres P."/>
            <person name="Bolotin A."/>
            <person name="Borchert S."/>
            <person name="Borriss R."/>
            <person name="Boursier L."/>
            <person name="Brans A."/>
            <person name="Braun M."/>
            <person name="Brignell S.C."/>
            <person name="Bron S."/>
            <person name="Brouillet S."/>
            <person name="Bruschi C.V."/>
            <person name="Caldwell B."/>
            <person name="Capuano V."/>
            <person name="Carter N.M."/>
            <person name="Choi S.-K."/>
            <person name="Codani J.-J."/>
            <person name="Connerton I.F."/>
            <person name="Cummings N.J."/>
            <person name="Daniel R.A."/>
            <person name="Denizot F."/>
            <person name="Devine K.M."/>
            <person name="Duesterhoeft A."/>
            <person name="Ehrlich S.D."/>
            <person name="Emmerson P.T."/>
            <person name="Entian K.-D."/>
            <person name="Errington J."/>
            <person name="Fabret C."/>
            <person name="Ferrari E."/>
            <person name="Foulger D."/>
            <person name="Fritz C."/>
            <person name="Fujita M."/>
            <person name="Fujita Y."/>
            <person name="Fuma S."/>
            <person name="Galizzi A."/>
            <person name="Galleron N."/>
            <person name="Ghim S.-Y."/>
            <person name="Glaser P."/>
            <person name="Goffeau A."/>
            <person name="Golightly E.J."/>
            <person name="Grandi G."/>
            <person name="Guiseppi G."/>
            <person name="Guy B.J."/>
            <person name="Haga K."/>
            <person name="Haiech J."/>
            <person name="Harwood C.R."/>
            <person name="Henaut A."/>
            <person name="Hilbert H."/>
            <person name="Holsappel S."/>
            <person name="Hosono S."/>
            <person name="Hullo M.-F."/>
            <person name="Itaya M."/>
            <person name="Jones L.-M."/>
            <person name="Joris B."/>
            <person name="Karamata D."/>
            <person name="Kasahara Y."/>
            <person name="Klaerr-Blanchard M."/>
            <person name="Klein C."/>
            <person name="Kobayashi Y."/>
            <person name="Koetter P."/>
            <person name="Koningstein G."/>
            <person name="Krogh S."/>
            <person name="Kumano M."/>
            <person name="Kurita K."/>
            <person name="Lapidus A."/>
            <person name="Lardinois S."/>
            <person name="Lauber J."/>
            <person name="Lazarevic V."/>
            <person name="Lee S.-M."/>
            <person name="Levine A."/>
            <person name="Liu H."/>
            <person name="Masuda S."/>
            <person name="Mauel C."/>
            <person name="Medigue C."/>
            <person name="Medina N."/>
            <person name="Mellado R.P."/>
            <person name="Mizuno M."/>
            <person name="Moestl D."/>
            <person name="Nakai S."/>
            <person name="Noback M."/>
            <person name="Noone D."/>
            <person name="O'Reilly M."/>
            <person name="Ogawa K."/>
            <person name="Ogiwara A."/>
            <person name="Oudega B."/>
            <person name="Park S.-H."/>
            <person name="Parro V."/>
            <person name="Pohl T.M."/>
            <person name="Portetelle D."/>
            <person name="Porwollik S."/>
            <person name="Prescott A.M."/>
            <person name="Presecan E."/>
            <person name="Pujic P."/>
            <person name="Purnelle B."/>
            <person name="Rapoport G."/>
            <person name="Rey M."/>
            <person name="Reynolds S."/>
            <person name="Rieger M."/>
            <person name="Rivolta C."/>
            <person name="Rocha E."/>
            <person name="Roche B."/>
            <person name="Rose M."/>
            <person name="Sadaie Y."/>
            <person name="Sato T."/>
            <person name="Scanlan E."/>
            <person name="Schleich S."/>
            <person name="Schroeter R."/>
            <person name="Scoffone F."/>
            <person name="Sekiguchi J."/>
            <person name="Sekowska A."/>
            <person name="Seror S.J."/>
            <person name="Serror P."/>
            <person name="Shin B.-S."/>
            <person name="Soldo B."/>
            <person name="Sorokin A."/>
            <person name="Tacconi E."/>
            <person name="Takagi T."/>
            <person name="Takahashi H."/>
            <person name="Takemaru K."/>
            <person name="Takeuchi M."/>
            <person name="Tamakoshi A."/>
            <person name="Tanaka T."/>
            <person name="Terpstra P."/>
            <person name="Tognoni A."/>
            <person name="Tosato V."/>
            <person name="Uchiyama S."/>
            <person name="Vandenbol M."/>
            <person name="Vannier F."/>
            <person name="Vassarotti A."/>
            <person name="Viari A."/>
            <person name="Wambutt R."/>
            <person name="Wedler E."/>
            <person name="Wedler H."/>
            <person name="Weitzenegger T."/>
            <person name="Winters P."/>
            <person name="Wipat A."/>
            <person name="Yamamoto H."/>
            <person name="Yamane K."/>
            <person name="Yasumoto K."/>
            <person name="Yata K."/>
            <person name="Yoshida K."/>
            <person name="Yoshikawa H.-F."/>
            <person name="Zumstein E."/>
            <person name="Yoshikawa H."/>
            <person name="Danchin A."/>
        </authorList>
    </citation>
    <scope>NUCLEOTIDE SEQUENCE [LARGE SCALE GENOMIC DNA]</scope>
    <source>
        <strain>168</strain>
    </source>
</reference>
<gene>
    <name type="primary">yhdF</name>
    <name type="ordered locus">BSU09450</name>
</gene>
<evidence type="ECO:0000250" key="1"/>
<evidence type="ECO:0000255" key="2">
    <source>
        <dbReference type="PROSITE-ProRule" id="PRU10001"/>
    </source>
</evidence>
<evidence type="ECO:0000256" key="3">
    <source>
        <dbReference type="SAM" id="MobiDB-lite"/>
    </source>
</evidence>
<evidence type="ECO:0000305" key="4"/>
<feature type="chain" id="PRO_0000054843" description="Uncharacterized oxidoreductase YhdF">
    <location>
        <begin position="1"/>
        <end position="289"/>
    </location>
</feature>
<feature type="region of interest" description="Disordered" evidence="3">
    <location>
        <begin position="1"/>
        <end position="39"/>
    </location>
</feature>
<feature type="compositionally biased region" description="Basic and acidic residues" evidence="3">
    <location>
        <begin position="1"/>
        <end position="20"/>
    </location>
</feature>
<feature type="active site" description="Proton acceptor" evidence="2">
    <location>
        <position position="194"/>
    </location>
</feature>
<feature type="binding site" evidence="1">
    <location>
        <begin position="49"/>
        <end position="73"/>
    </location>
    <ligand>
        <name>NADP(+)</name>
        <dbReference type="ChEBI" id="CHEBI:58349"/>
    </ligand>
</feature>
<feature type="binding site" evidence="1">
    <location>
        <position position="181"/>
    </location>
    <ligand>
        <name>substrate</name>
    </ligand>
</feature>
<proteinExistence type="inferred from homology"/>
<organism>
    <name type="scientific">Bacillus subtilis (strain 168)</name>
    <dbReference type="NCBI Taxonomy" id="224308"/>
    <lineage>
        <taxon>Bacteria</taxon>
        <taxon>Bacillati</taxon>
        <taxon>Bacillota</taxon>
        <taxon>Bacilli</taxon>
        <taxon>Bacillales</taxon>
        <taxon>Bacillaceae</taxon>
        <taxon>Bacillus</taxon>
    </lineage>
</organism>
<keyword id="KW-0560">Oxidoreductase</keyword>
<keyword id="KW-1185">Reference proteome</keyword>
<protein>
    <recommendedName>
        <fullName>Uncharacterized oxidoreductase YhdF</fullName>
        <ecNumber>1.-.-.-</ecNumber>
    </recommendedName>
</protein>
<dbReference type="EC" id="1.-.-.-"/>
<dbReference type="EMBL" id="Y14082">
    <property type="protein sequence ID" value="CAA74490.1"/>
    <property type="molecule type" value="Genomic_DNA"/>
</dbReference>
<dbReference type="EMBL" id="AL009126">
    <property type="protein sequence ID" value="CAB12784.1"/>
    <property type="molecule type" value="Genomic_DNA"/>
</dbReference>
<dbReference type="PIR" id="D69825">
    <property type="entry name" value="D69825"/>
</dbReference>
<dbReference type="RefSeq" id="NP_388826.1">
    <property type="nucleotide sequence ID" value="NC_000964.3"/>
</dbReference>
<dbReference type="RefSeq" id="WP_003244867.1">
    <property type="nucleotide sequence ID" value="NZ_OZ025638.1"/>
</dbReference>
<dbReference type="SMR" id="O07575"/>
<dbReference type="FunCoup" id="O07575">
    <property type="interactions" value="132"/>
</dbReference>
<dbReference type="STRING" id="224308.BSU09450"/>
<dbReference type="PaxDb" id="224308-BSU09450"/>
<dbReference type="EnsemblBacteria" id="CAB12784">
    <property type="protein sequence ID" value="CAB12784"/>
    <property type="gene ID" value="BSU_09450"/>
</dbReference>
<dbReference type="GeneID" id="939749"/>
<dbReference type="KEGG" id="bsu:BSU09450"/>
<dbReference type="PATRIC" id="fig|224308.179.peg.1018"/>
<dbReference type="eggNOG" id="COG1028">
    <property type="taxonomic scope" value="Bacteria"/>
</dbReference>
<dbReference type="InParanoid" id="O07575"/>
<dbReference type="OrthoDB" id="9803333at2"/>
<dbReference type="PhylomeDB" id="O07575"/>
<dbReference type="BioCyc" id="BSUB:BSU09450-MONOMER"/>
<dbReference type="Proteomes" id="UP000001570">
    <property type="component" value="Chromosome"/>
</dbReference>
<dbReference type="GO" id="GO:0016614">
    <property type="term" value="F:oxidoreductase activity, acting on CH-OH group of donors"/>
    <property type="evidence" value="ECO:0007669"/>
    <property type="project" value="UniProtKB-ARBA"/>
</dbReference>
<dbReference type="CDD" id="cd05355">
    <property type="entry name" value="SDR_c1"/>
    <property type="match status" value="1"/>
</dbReference>
<dbReference type="FunFam" id="3.40.50.720:FF:000084">
    <property type="entry name" value="Short-chain dehydrogenase reductase"/>
    <property type="match status" value="1"/>
</dbReference>
<dbReference type="Gene3D" id="3.40.50.720">
    <property type="entry name" value="NAD(P)-binding Rossmann-like Domain"/>
    <property type="match status" value="1"/>
</dbReference>
<dbReference type="InterPro" id="IPR036291">
    <property type="entry name" value="NAD(P)-bd_dom_sf"/>
</dbReference>
<dbReference type="InterPro" id="IPR020904">
    <property type="entry name" value="Sc_DH/Rdtase_CS"/>
</dbReference>
<dbReference type="InterPro" id="IPR002347">
    <property type="entry name" value="SDR_fam"/>
</dbReference>
<dbReference type="NCBIfam" id="NF005214">
    <property type="entry name" value="PRK06701.1"/>
    <property type="match status" value="1"/>
</dbReference>
<dbReference type="NCBIfam" id="NF005559">
    <property type="entry name" value="PRK07231.1"/>
    <property type="match status" value="1"/>
</dbReference>
<dbReference type="PANTHER" id="PTHR48107:SF16">
    <property type="entry name" value="NADPH-DEPENDENT ALDEHYDE REDUCTASE 1, CHLOROPLASTIC"/>
    <property type="match status" value="1"/>
</dbReference>
<dbReference type="PANTHER" id="PTHR48107">
    <property type="entry name" value="NADPH-DEPENDENT ALDEHYDE REDUCTASE-LIKE PROTEIN, CHLOROPLASTIC-RELATED"/>
    <property type="match status" value="1"/>
</dbReference>
<dbReference type="Pfam" id="PF13561">
    <property type="entry name" value="adh_short_C2"/>
    <property type="match status" value="1"/>
</dbReference>
<dbReference type="PRINTS" id="PR00081">
    <property type="entry name" value="GDHRDH"/>
</dbReference>
<dbReference type="PRINTS" id="PR00080">
    <property type="entry name" value="SDRFAMILY"/>
</dbReference>
<dbReference type="SUPFAM" id="SSF51735">
    <property type="entry name" value="NAD(P)-binding Rossmann-fold domains"/>
    <property type="match status" value="1"/>
</dbReference>
<dbReference type="PROSITE" id="PS00061">
    <property type="entry name" value="ADH_SHORT"/>
    <property type="match status" value="1"/>
</dbReference>
<comment type="similarity">
    <text evidence="4">Belongs to the short-chain dehydrogenases/reductases (SDR) family.</text>
</comment>
<accession>O07575</accession>